<sequence length="94" mass="9912">MLKPLGDRVVLKIEEKEQTVGGFVLAGSAQEKTKTAQVVATGQGVRTLNGDLVAPSVKTGDRVLVEAHAGLDVKDGDEKYIIVGEANILAIIEE</sequence>
<evidence type="ECO:0000255" key="1">
    <source>
        <dbReference type="HAMAP-Rule" id="MF_00580"/>
    </source>
</evidence>
<feature type="chain" id="PRO_1000146922" description="Co-chaperonin GroES">
    <location>
        <begin position="1"/>
        <end position="94"/>
    </location>
</feature>
<name>CH10_STRZP</name>
<reference key="1">
    <citation type="journal article" date="2010" name="Genome Biol.">
        <title>Structure and dynamics of the pan-genome of Streptococcus pneumoniae and closely related species.</title>
        <authorList>
            <person name="Donati C."/>
            <person name="Hiller N.L."/>
            <person name="Tettelin H."/>
            <person name="Muzzi A."/>
            <person name="Croucher N.J."/>
            <person name="Angiuoli S.V."/>
            <person name="Oggioni M."/>
            <person name="Dunning Hotopp J.C."/>
            <person name="Hu F.Z."/>
            <person name="Riley D.R."/>
            <person name="Covacci A."/>
            <person name="Mitchell T.J."/>
            <person name="Bentley S.D."/>
            <person name="Kilian M."/>
            <person name="Ehrlich G.D."/>
            <person name="Rappuoli R."/>
            <person name="Moxon E.R."/>
            <person name="Masignani V."/>
        </authorList>
    </citation>
    <scope>NUCLEOTIDE SEQUENCE [LARGE SCALE GENOMIC DNA]</scope>
    <source>
        <strain>P1031</strain>
    </source>
</reference>
<proteinExistence type="inferred from homology"/>
<gene>
    <name evidence="1" type="primary">groES</name>
    <name evidence="1" type="synonym">groS</name>
    <name type="ordered locus">SPP_1936</name>
</gene>
<dbReference type="EMBL" id="CP000920">
    <property type="protein sequence ID" value="ACO20372.1"/>
    <property type="molecule type" value="Genomic_DNA"/>
</dbReference>
<dbReference type="RefSeq" id="WP_000917330.1">
    <property type="nucleotide sequence ID" value="NC_012467.1"/>
</dbReference>
<dbReference type="SMR" id="C1CML8"/>
<dbReference type="GeneID" id="45652868"/>
<dbReference type="KEGG" id="spp:SPP_1936"/>
<dbReference type="HOGENOM" id="CLU_132825_1_2_9"/>
<dbReference type="GO" id="GO:0005737">
    <property type="term" value="C:cytoplasm"/>
    <property type="evidence" value="ECO:0007669"/>
    <property type="project" value="UniProtKB-SubCell"/>
</dbReference>
<dbReference type="GO" id="GO:0005524">
    <property type="term" value="F:ATP binding"/>
    <property type="evidence" value="ECO:0007669"/>
    <property type="project" value="InterPro"/>
</dbReference>
<dbReference type="GO" id="GO:0046872">
    <property type="term" value="F:metal ion binding"/>
    <property type="evidence" value="ECO:0007669"/>
    <property type="project" value="TreeGrafter"/>
</dbReference>
<dbReference type="GO" id="GO:0044183">
    <property type="term" value="F:protein folding chaperone"/>
    <property type="evidence" value="ECO:0007669"/>
    <property type="project" value="InterPro"/>
</dbReference>
<dbReference type="GO" id="GO:0051087">
    <property type="term" value="F:protein-folding chaperone binding"/>
    <property type="evidence" value="ECO:0007669"/>
    <property type="project" value="TreeGrafter"/>
</dbReference>
<dbReference type="GO" id="GO:0051082">
    <property type="term" value="F:unfolded protein binding"/>
    <property type="evidence" value="ECO:0007669"/>
    <property type="project" value="TreeGrafter"/>
</dbReference>
<dbReference type="GO" id="GO:0051085">
    <property type="term" value="P:chaperone cofactor-dependent protein refolding"/>
    <property type="evidence" value="ECO:0007669"/>
    <property type="project" value="TreeGrafter"/>
</dbReference>
<dbReference type="CDD" id="cd00320">
    <property type="entry name" value="cpn10"/>
    <property type="match status" value="1"/>
</dbReference>
<dbReference type="FunFam" id="2.30.33.40:FF:000007">
    <property type="entry name" value="10 kDa chaperonin"/>
    <property type="match status" value="1"/>
</dbReference>
<dbReference type="Gene3D" id="2.30.33.40">
    <property type="entry name" value="GroES chaperonin"/>
    <property type="match status" value="1"/>
</dbReference>
<dbReference type="HAMAP" id="MF_00580">
    <property type="entry name" value="CH10"/>
    <property type="match status" value="1"/>
</dbReference>
<dbReference type="InterPro" id="IPR020818">
    <property type="entry name" value="Chaperonin_GroES"/>
</dbReference>
<dbReference type="InterPro" id="IPR037124">
    <property type="entry name" value="Chaperonin_GroES_sf"/>
</dbReference>
<dbReference type="InterPro" id="IPR018369">
    <property type="entry name" value="Chaprnonin_Cpn10_CS"/>
</dbReference>
<dbReference type="InterPro" id="IPR011032">
    <property type="entry name" value="GroES-like_sf"/>
</dbReference>
<dbReference type="NCBIfam" id="NF001528">
    <property type="entry name" value="PRK00364.1-4"/>
    <property type="match status" value="1"/>
</dbReference>
<dbReference type="PANTHER" id="PTHR10772">
    <property type="entry name" value="10 KDA HEAT SHOCK PROTEIN"/>
    <property type="match status" value="1"/>
</dbReference>
<dbReference type="PANTHER" id="PTHR10772:SF58">
    <property type="entry name" value="CO-CHAPERONIN GROES"/>
    <property type="match status" value="1"/>
</dbReference>
<dbReference type="Pfam" id="PF00166">
    <property type="entry name" value="Cpn10"/>
    <property type="match status" value="1"/>
</dbReference>
<dbReference type="PRINTS" id="PR00297">
    <property type="entry name" value="CHAPERONIN10"/>
</dbReference>
<dbReference type="SMART" id="SM00883">
    <property type="entry name" value="Cpn10"/>
    <property type="match status" value="1"/>
</dbReference>
<dbReference type="SUPFAM" id="SSF50129">
    <property type="entry name" value="GroES-like"/>
    <property type="match status" value="1"/>
</dbReference>
<dbReference type="PROSITE" id="PS00681">
    <property type="entry name" value="CHAPERONINS_CPN10"/>
    <property type="match status" value="1"/>
</dbReference>
<comment type="function">
    <text evidence="1">Together with the chaperonin GroEL, plays an essential role in assisting protein folding. The GroEL-GroES system forms a nano-cage that allows encapsulation of the non-native substrate proteins and provides a physical environment optimized to promote and accelerate protein folding. GroES binds to the apical surface of the GroEL ring, thereby capping the opening of the GroEL channel.</text>
</comment>
<comment type="subunit">
    <text evidence="1">Heptamer of 7 subunits arranged in a ring. Interacts with the chaperonin GroEL.</text>
</comment>
<comment type="subcellular location">
    <subcellularLocation>
        <location evidence="1">Cytoplasm</location>
    </subcellularLocation>
</comment>
<comment type="similarity">
    <text evidence="1">Belongs to the GroES chaperonin family.</text>
</comment>
<accession>C1CML8</accession>
<organism>
    <name type="scientific">Streptococcus pneumoniae (strain P1031)</name>
    <dbReference type="NCBI Taxonomy" id="488223"/>
    <lineage>
        <taxon>Bacteria</taxon>
        <taxon>Bacillati</taxon>
        <taxon>Bacillota</taxon>
        <taxon>Bacilli</taxon>
        <taxon>Lactobacillales</taxon>
        <taxon>Streptococcaceae</taxon>
        <taxon>Streptococcus</taxon>
    </lineage>
</organism>
<keyword id="KW-0143">Chaperone</keyword>
<keyword id="KW-0963">Cytoplasm</keyword>
<protein>
    <recommendedName>
        <fullName evidence="1">Co-chaperonin GroES</fullName>
    </recommendedName>
    <alternativeName>
        <fullName evidence="1">10 kDa chaperonin</fullName>
    </alternativeName>
    <alternativeName>
        <fullName evidence="1">Chaperonin-10</fullName>
        <shortName evidence="1">Cpn10</shortName>
    </alternativeName>
</protein>